<evidence type="ECO:0000250" key="1">
    <source>
        <dbReference type="UniProtKB" id="O00232"/>
    </source>
</evidence>
<evidence type="ECO:0000255" key="2">
    <source>
        <dbReference type="PROSITE-ProRule" id="PRU01185"/>
    </source>
</evidence>
<evidence type="ECO:0000269" key="3">
    <source>
    </source>
</evidence>
<evidence type="ECO:0000305" key="4"/>
<comment type="function">
    <text evidence="1">Component of the 26S proteasome, a multiprotein complex involved in the ATP-dependent degradation of ubiquitinated proteins. This complex plays a key role in the maintenance of protein homeostasis by removing misfolded or damaged proteins, which could impair cellular functions, and by removing proteins whose functions are no longer required. Therefore, the proteasome participates in numerous cellular processes, including cell cycle progression, apoptosis, or DNA damage repair.</text>
</comment>
<comment type="subunit">
    <text evidence="1 3">Component of the 19S proteasome regulatory particle complex (PubMed:16857966). The 26S proteasome consists of a 20S core particle (CP) and two 19S regulatory subunits (RP) (By similarity). The regulatory particle is made of a lid composed of 9 subunits including PSMD12, a base containing 6 ATPases and few additional components (By similarity). Interacts with ERCC6 (By similarity).</text>
</comment>
<comment type="similarity">
    <text evidence="4">Belongs to the proteasome subunit p55 family.</text>
</comment>
<organism>
    <name type="scientific">Mus musculus</name>
    <name type="common">Mouse</name>
    <dbReference type="NCBI Taxonomy" id="10090"/>
    <lineage>
        <taxon>Eukaryota</taxon>
        <taxon>Metazoa</taxon>
        <taxon>Chordata</taxon>
        <taxon>Craniata</taxon>
        <taxon>Vertebrata</taxon>
        <taxon>Euteleostomi</taxon>
        <taxon>Mammalia</taxon>
        <taxon>Eutheria</taxon>
        <taxon>Euarchontoglires</taxon>
        <taxon>Glires</taxon>
        <taxon>Rodentia</taxon>
        <taxon>Myomorpha</taxon>
        <taxon>Muroidea</taxon>
        <taxon>Muridae</taxon>
        <taxon>Murinae</taxon>
        <taxon>Mus</taxon>
        <taxon>Mus</taxon>
    </lineage>
</organism>
<dbReference type="EMBL" id="AK007619">
    <property type="protein sequence ID" value="BAB25140.1"/>
    <property type="molecule type" value="mRNA"/>
</dbReference>
<dbReference type="EMBL" id="AK007680">
    <property type="protein sequence ID" value="BAB25184.1"/>
    <property type="molecule type" value="mRNA"/>
</dbReference>
<dbReference type="EMBL" id="AK009969">
    <property type="protein sequence ID" value="BAB26619.1"/>
    <property type="molecule type" value="mRNA"/>
</dbReference>
<dbReference type="EMBL" id="AK017843">
    <property type="protein sequence ID" value="BAB30969.1"/>
    <property type="molecule type" value="mRNA"/>
</dbReference>
<dbReference type="EMBL" id="AK151242">
    <property type="protein sequence ID" value="BAE30234.1"/>
    <property type="molecule type" value="mRNA"/>
</dbReference>
<dbReference type="EMBL" id="AL645687">
    <property type="status" value="NOT_ANNOTATED_CDS"/>
    <property type="molecule type" value="Genomic_DNA"/>
</dbReference>
<dbReference type="EMBL" id="AL683815">
    <property type="status" value="NOT_ANNOTATED_CDS"/>
    <property type="molecule type" value="Genomic_DNA"/>
</dbReference>
<dbReference type="EMBL" id="CH466558">
    <property type="protein sequence ID" value="EDL34331.1"/>
    <property type="molecule type" value="Genomic_DNA"/>
</dbReference>
<dbReference type="EMBL" id="BC004694">
    <property type="protein sequence ID" value="AAH04694.1"/>
    <property type="molecule type" value="mRNA"/>
</dbReference>
<dbReference type="CCDS" id="CCDS25568.1"/>
<dbReference type="RefSeq" id="NP_080170.1">
    <property type="nucleotide sequence ID" value="NM_025894.2"/>
</dbReference>
<dbReference type="SMR" id="Q9D8W5"/>
<dbReference type="BioGRID" id="211864">
    <property type="interactions" value="54"/>
</dbReference>
<dbReference type="FunCoup" id="Q9D8W5">
    <property type="interactions" value="2570"/>
</dbReference>
<dbReference type="IntAct" id="Q9D8W5">
    <property type="interactions" value="2"/>
</dbReference>
<dbReference type="STRING" id="10090.ENSMUSP00000021063"/>
<dbReference type="GlyGen" id="Q9D8W5">
    <property type="glycosylation" value="1 site, 1 O-linked glycan (1 site)"/>
</dbReference>
<dbReference type="iPTMnet" id="Q9D8W5"/>
<dbReference type="PhosphoSitePlus" id="Q9D8W5"/>
<dbReference type="SwissPalm" id="Q9D8W5"/>
<dbReference type="jPOST" id="Q9D8W5"/>
<dbReference type="PaxDb" id="10090-ENSMUSP00000021063"/>
<dbReference type="PeptideAtlas" id="Q9D8W5"/>
<dbReference type="ProteomicsDB" id="291573"/>
<dbReference type="Pumba" id="Q9D8W5"/>
<dbReference type="Antibodypedia" id="19204">
    <property type="antibodies" value="220 antibodies from 30 providers"/>
</dbReference>
<dbReference type="DNASU" id="66997"/>
<dbReference type="Ensembl" id="ENSMUST00000021063.13">
    <property type="protein sequence ID" value="ENSMUSP00000021063.7"/>
    <property type="gene ID" value="ENSMUSG00000020720.14"/>
</dbReference>
<dbReference type="GeneID" id="66997"/>
<dbReference type="KEGG" id="mmu:66997"/>
<dbReference type="UCSC" id="uc007mar.1">
    <property type="organism name" value="mouse"/>
</dbReference>
<dbReference type="AGR" id="MGI:1914247"/>
<dbReference type="CTD" id="5718"/>
<dbReference type="MGI" id="MGI:1914247">
    <property type="gene designation" value="Psmd12"/>
</dbReference>
<dbReference type="VEuPathDB" id="HostDB:ENSMUSG00000020720"/>
<dbReference type="eggNOG" id="KOG1498">
    <property type="taxonomic scope" value="Eukaryota"/>
</dbReference>
<dbReference type="GeneTree" id="ENSGT00940000153510"/>
<dbReference type="HOGENOM" id="CLU_033860_2_0_1"/>
<dbReference type="InParanoid" id="Q9D8W5"/>
<dbReference type="OMA" id="AENEMFK"/>
<dbReference type="OrthoDB" id="268763at2759"/>
<dbReference type="PhylomeDB" id="Q9D8W5"/>
<dbReference type="TreeFam" id="TF105721"/>
<dbReference type="Reactome" id="R-MMU-1169091">
    <property type="pathway name" value="Activation of NF-kappaB in B cells"/>
</dbReference>
<dbReference type="Reactome" id="R-MMU-1234176">
    <property type="pathway name" value="Oxygen-dependent proline hydroxylation of Hypoxia-inducible Factor Alpha"/>
</dbReference>
<dbReference type="Reactome" id="R-MMU-1236978">
    <property type="pathway name" value="Cross-presentation of soluble exogenous antigens (endosomes)"/>
</dbReference>
<dbReference type="Reactome" id="R-MMU-174084">
    <property type="pathway name" value="Autodegradation of Cdh1 by Cdh1:APC/C"/>
</dbReference>
<dbReference type="Reactome" id="R-MMU-174154">
    <property type="pathway name" value="APC/C:Cdc20 mediated degradation of Securin"/>
</dbReference>
<dbReference type="Reactome" id="R-MMU-174178">
    <property type="pathway name" value="APC/C:Cdh1 mediated degradation of Cdc20 and other APC/C:Cdh1 targeted proteins in late mitosis/early G1"/>
</dbReference>
<dbReference type="Reactome" id="R-MMU-174184">
    <property type="pathway name" value="Cdc20:Phospho-APC/C mediated degradation of Cyclin A"/>
</dbReference>
<dbReference type="Reactome" id="R-MMU-187577">
    <property type="pathway name" value="SCF(Skp2)-mediated degradation of p27/p21"/>
</dbReference>
<dbReference type="Reactome" id="R-MMU-195253">
    <property type="pathway name" value="Degradation of beta-catenin by the destruction complex"/>
</dbReference>
<dbReference type="Reactome" id="R-MMU-202424">
    <property type="pathway name" value="Downstream TCR signaling"/>
</dbReference>
<dbReference type="Reactome" id="R-MMU-2467813">
    <property type="pathway name" value="Separation of Sister Chromatids"/>
</dbReference>
<dbReference type="Reactome" id="R-MMU-2871837">
    <property type="pathway name" value="FCERI mediated NF-kB activation"/>
</dbReference>
<dbReference type="Reactome" id="R-MMU-349425">
    <property type="pathway name" value="Autodegradation of the E3 ubiquitin ligase COP1"/>
</dbReference>
<dbReference type="Reactome" id="R-MMU-350562">
    <property type="pathway name" value="Regulation of ornithine decarboxylase (ODC)"/>
</dbReference>
<dbReference type="Reactome" id="R-MMU-382556">
    <property type="pathway name" value="ABC-family proteins mediated transport"/>
</dbReference>
<dbReference type="Reactome" id="R-MMU-450408">
    <property type="pathway name" value="AUF1 (hnRNP D0) binds and destabilizes mRNA"/>
</dbReference>
<dbReference type="Reactome" id="R-MMU-4608870">
    <property type="pathway name" value="Asymmetric localization of PCP proteins"/>
</dbReference>
<dbReference type="Reactome" id="R-MMU-4641257">
    <property type="pathway name" value="Degradation of AXIN"/>
</dbReference>
<dbReference type="Reactome" id="R-MMU-4641258">
    <property type="pathway name" value="Degradation of DVL"/>
</dbReference>
<dbReference type="Reactome" id="R-MMU-5358346">
    <property type="pathway name" value="Hedgehog ligand biogenesis"/>
</dbReference>
<dbReference type="Reactome" id="R-MMU-5607761">
    <property type="pathway name" value="Dectin-1 mediated noncanonical NF-kB signaling"/>
</dbReference>
<dbReference type="Reactome" id="R-MMU-5607764">
    <property type="pathway name" value="CLEC7A (Dectin-1) signaling"/>
</dbReference>
<dbReference type="Reactome" id="R-MMU-5610780">
    <property type="pathway name" value="Degradation of GLI1 by the proteasome"/>
</dbReference>
<dbReference type="Reactome" id="R-MMU-5610785">
    <property type="pathway name" value="GLI3 is processed to GLI3R by the proteasome"/>
</dbReference>
<dbReference type="Reactome" id="R-MMU-5632684">
    <property type="pathway name" value="Hedgehog 'on' state"/>
</dbReference>
<dbReference type="Reactome" id="R-MMU-5658442">
    <property type="pathway name" value="Regulation of RAS by GAPs"/>
</dbReference>
<dbReference type="Reactome" id="R-MMU-5668541">
    <property type="pathway name" value="TNFR2 non-canonical NF-kB pathway"/>
</dbReference>
<dbReference type="Reactome" id="R-MMU-5676590">
    <property type="pathway name" value="NIK--&gt;noncanonical NF-kB signaling"/>
</dbReference>
<dbReference type="Reactome" id="R-MMU-5687128">
    <property type="pathway name" value="MAPK6/MAPK4 signaling"/>
</dbReference>
<dbReference type="Reactome" id="R-MMU-5689603">
    <property type="pathway name" value="UCH proteinases"/>
</dbReference>
<dbReference type="Reactome" id="R-MMU-5689880">
    <property type="pathway name" value="Ub-specific processing proteases"/>
</dbReference>
<dbReference type="Reactome" id="R-MMU-6798695">
    <property type="pathway name" value="Neutrophil degranulation"/>
</dbReference>
<dbReference type="Reactome" id="R-MMU-68867">
    <property type="pathway name" value="Assembly of the pre-replicative complex"/>
</dbReference>
<dbReference type="Reactome" id="R-MMU-68949">
    <property type="pathway name" value="Orc1 removal from chromatin"/>
</dbReference>
<dbReference type="Reactome" id="R-MMU-69017">
    <property type="pathway name" value="CDK-mediated phosphorylation and removal of Cdc6"/>
</dbReference>
<dbReference type="Reactome" id="R-MMU-69481">
    <property type="pathway name" value="G2/M Checkpoints"/>
</dbReference>
<dbReference type="Reactome" id="R-MMU-69601">
    <property type="pathway name" value="Ubiquitin Mediated Degradation of Phosphorylated Cdc25A"/>
</dbReference>
<dbReference type="Reactome" id="R-MMU-75815">
    <property type="pathway name" value="Ubiquitin-dependent degradation of Cyclin D"/>
</dbReference>
<dbReference type="Reactome" id="R-MMU-8852276">
    <property type="pathway name" value="The role of GTSE1 in G2/M progression after G2 checkpoint"/>
</dbReference>
<dbReference type="Reactome" id="R-MMU-8854050">
    <property type="pathway name" value="FBXL7 down-regulates AURKA during mitotic entry and in early mitosis"/>
</dbReference>
<dbReference type="Reactome" id="R-MMU-8939236">
    <property type="pathway name" value="RUNX1 regulates transcription of genes involved in differentiation of HSCs"/>
</dbReference>
<dbReference type="Reactome" id="R-MMU-8939902">
    <property type="pathway name" value="Regulation of RUNX2 expression and activity"/>
</dbReference>
<dbReference type="Reactome" id="R-MMU-8941858">
    <property type="pathway name" value="Regulation of RUNX3 expression and activity"/>
</dbReference>
<dbReference type="Reactome" id="R-MMU-8948751">
    <property type="pathway name" value="Regulation of PTEN stability and activity"/>
</dbReference>
<dbReference type="Reactome" id="R-MMU-8951664">
    <property type="pathway name" value="Neddylation"/>
</dbReference>
<dbReference type="Reactome" id="R-MMU-9020702">
    <property type="pathway name" value="Interleukin-1 signaling"/>
</dbReference>
<dbReference type="Reactome" id="R-MMU-9755511">
    <property type="pathway name" value="KEAP1-NFE2L2 pathway"/>
</dbReference>
<dbReference type="Reactome" id="R-MMU-9762114">
    <property type="pathway name" value="GSK3B and BTRC:CUL1-mediated-degradation of NFE2L2"/>
</dbReference>
<dbReference type="Reactome" id="R-MMU-983168">
    <property type="pathway name" value="Antigen processing: Ubiquitination &amp; Proteasome degradation"/>
</dbReference>
<dbReference type="Reactome" id="R-MMU-9907900">
    <property type="pathway name" value="Proteasome assembly"/>
</dbReference>
<dbReference type="BioGRID-ORCS" id="66997">
    <property type="hits" value="24 hits in 77 CRISPR screens"/>
</dbReference>
<dbReference type="PRO" id="PR:Q9D8W5"/>
<dbReference type="Proteomes" id="UP000000589">
    <property type="component" value="Chromosome 11"/>
</dbReference>
<dbReference type="RNAct" id="Q9D8W5">
    <property type="molecule type" value="protein"/>
</dbReference>
<dbReference type="Bgee" id="ENSMUSG00000020720">
    <property type="expression patterns" value="Expressed in otic placode and 285 other cell types or tissues"/>
</dbReference>
<dbReference type="ExpressionAtlas" id="Q9D8W5">
    <property type="expression patterns" value="baseline and differential"/>
</dbReference>
<dbReference type="GO" id="GO:0022624">
    <property type="term" value="C:proteasome accessory complex"/>
    <property type="evidence" value="ECO:0000314"/>
    <property type="project" value="UniProtKB"/>
</dbReference>
<dbReference type="GO" id="GO:0005838">
    <property type="term" value="C:proteasome regulatory particle"/>
    <property type="evidence" value="ECO:0000314"/>
    <property type="project" value="MGI"/>
</dbReference>
<dbReference type="FunFam" id="1.10.10.10:FF:000159">
    <property type="entry name" value="26S proteasome non-ATPase regulatory subunit 12"/>
    <property type="match status" value="1"/>
</dbReference>
<dbReference type="Gene3D" id="1.10.10.10">
    <property type="entry name" value="Winged helix-like DNA-binding domain superfamily/Winged helix DNA-binding domain"/>
    <property type="match status" value="1"/>
</dbReference>
<dbReference type="InterPro" id="IPR000717">
    <property type="entry name" value="PCI_dom"/>
</dbReference>
<dbReference type="InterPro" id="IPR054559">
    <property type="entry name" value="PSMD12-CSN4-like_N"/>
</dbReference>
<dbReference type="InterPro" id="IPR040134">
    <property type="entry name" value="PSMD12/CSN4"/>
</dbReference>
<dbReference type="InterPro" id="IPR040896">
    <property type="entry name" value="RPN5_C"/>
</dbReference>
<dbReference type="InterPro" id="IPR036388">
    <property type="entry name" value="WH-like_DNA-bd_sf"/>
</dbReference>
<dbReference type="InterPro" id="IPR036390">
    <property type="entry name" value="WH_DNA-bd_sf"/>
</dbReference>
<dbReference type="PANTHER" id="PTHR10855:SF1">
    <property type="entry name" value="26S PROTEASOME NON-ATPASE REGULATORY SUBUNIT 12"/>
    <property type="match status" value="1"/>
</dbReference>
<dbReference type="PANTHER" id="PTHR10855">
    <property type="entry name" value="26S PROTEASOME NON-ATPASE REGULATORY SUBUNIT 12/COP9 SIGNALOSOME COMPLEX SUBUNIT 4"/>
    <property type="match status" value="1"/>
</dbReference>
<dbReference type="Pfam" id="PF01399">
    <property type="entry name" value="PCI"/>
    <property type="match status" value="1"/>
</dbReference>
<dbReference type="Pfam" id="PF22241">
    <property type="entry name" value="PSMD12-CSN4_N"/>
    <property type="match status" value="1"/>
</dbReference>
<dbReference type="Pfam" id="PF18098">
    <property type="entry name" value="RPN5_C"/>
    <property type="match status" value="1"/>
</dbReference>
<dbReference type="SMART" id="SM00088">
    <property type="entry name" value="PINT"/>
    <property type="match status" value="1"/>
</dbReference>
<dbReference type="SUPFAM" id="SSF46785">
    <property type="entry name" value="Winged helix' DNA-binding domain"/>
    <property type="match status" value="1"/>
</dbReference>
<dbReference type="PROSITE" id="PS50250">
    <property type="entry name" value="PCI"/>
    <property type="match status" value="1"/>
</dbReference>
<protein>
    <recommendedName>
        <fullName>26S proteasome non-ATPase regulatory subunit 12</fullName>
    </recommendedName>
    <alternativeName>
        <fullName>26S proteasome regulatory subunit RPN5</fullName>
    </alternativeName>
    <alternativeName>
        <fullName>26S proteasome regulatory subunit p55</fullName>
    </alternativeName>
</protein>
<keyword id="KW-0007">Acetylation</keyword>
<keyword id="KW-1017">Isopeptide bond</keyword>
<keyword id="KW-0647">Proteasome</keyword>
<keyword id="KW-1185">Reference proteome</keyword>
<keyword id="KW-0832">Ubl conjugation</keyword>
<feature type="initiator methionine" description="Removed" evidence="3">
    <location>
        <position position="1"/>
    </location>
</feature>
<feature type="chain" id="PRO_0000173862" description="26S proteasome non-ATPase regulatory subunit 12">
    <location>
        <begin position="2"/>
        <end position="456"/>
    </location>
</feature>
<feature type="domain" description="PCI" evidence="2">
    <location>
        <begin position="242"/>
        <end position="420"/>
    </location>
</feature>
<feature type="modified residue" description="N-acetylalanine" evidence="3">
    <location>
        <position position="2"/>
    </location>
</feature>
<feature type="modified residue" description="N6-acetyllysine" evidence="1">
    <location>
        <position position="368"/>
    </location>
</feature>
<feature type="cross-link" description="Glycyl lysine isopeptide (Lys-Gly) (interchain with G-Cter in SUMO1); alternate" evidence="1">
    <location>
        <position position="92"/>
    </location>
</feature>
<feature type="cross-link" description="Glycyl lysine isopeptide (Lys-Gly) (interchain with G-Cter in SUMO2); alternate" evidence="1">
    <location>
        <position position="92"/>
    </location>
</feature>
<feature type="sequence conflict" description="In Ref. 1; BAB25140." evidence="4" ref="1">
    <original>L</original>
    <variation>H</variation>
    <location>
        <position position="83"/>
    </location>
</feature>
<feature type="sequence conflict" description="In Ref. 1; BAB30969." evidence="4" ref="1">
    <original>K</original>
    <variation>R</variation>
    <location>
        <position position="207"/>
    </location>
</feature>
<feature type="sequence conflict" description="In Ref. 1; BAB25140." evidence="4" ref="1">
    <original>F</original>
    <variation>S</variation>
    <location>
        <position position="214"/>
    </location>
</feature>
<feature type="sequence conflict" description="In Ref. 1; BAB25140." evidence="4" ref="1">
    <original>L</original>
    <variation>M</variation>
    <location>
        <position position="222"/>
    </location>
</feature>
<feature type="sequence conflict" description="In Ref. 1; BAB30969." evidence="4" ref="1">
    <original>R</original>
    <variation>G</variation>
    <location>
        <position position="377"/>
    </location>
</feature>
<gene>
    <name type="primary">Psmd12</name>
</gene>
<name>PSD12_MOUSE</name>
<reference key="1">
    <citation type="journal article" date="2005" name="Science">
        <title>The transcriptional landscape of the mammalian genome.</title>
        <authorList>
            <person name="Carninci P."/>
            <person name="Kasukawa T."/>
            <person name="Katayama S."/>
            <person name="Gough J."/>
            <person name="Frith M.C."/>
            <person name="Maeda N."/>
            <person name="Oyama R."/>
            <person name="Ravasi T."/>
            <person name="Lenhard B."/>
            <person name="Wells C."/>
            <person name="Kodzius R."/>
            <person name="Shimokawa K."/>
            <person name="Bajic V.B."/>
            <person name="Brenner S.E."/>
            <person name="Batalov S."/>
            <person name="Forrest A.R."/>
            <person name="Zavolan M."/>
            <person name="Davis M.J."/>
            <person name="Wilming L.G."/>
            <person name="Aidinis V."/>
            <person name="Allen J.E."/>
            <person name="Ambesi-Impiombato A."/>
            <person name="Apweiler R."/>
            <person name="Aturaliya R.N."/>
            <person name="Bailey T.L."/>
            <person name="Bansal M."/>
            <person name="Baxter L."/>
            <person name="Beisel K.W."/>
            <person name="Bersano T."/>
            <person name="Bono H."/>
            <person name="Chalk A.M."/>
            <person name="Chiu K.P."/>
            <person name="Choudhary V."/>
            <person name="Christoffels A."/>
            <person name="Clutterbuck D.R."/>
            <person name="Crowe M.L."/>
            <person name="Dalla E."/>
            <person name="Dalrymple B.P."/>
            <person name="de Bono B."/>
            <person name="Della Gatta G."/>
            <person name="di Bernardo D."/>
            <person name="Down T."/>
            <person name="Engstrom P."/>
            <person name="Fagiolini M."/>
            <person name="Faulkner G."/>
            <person name="Fletcher C.F."/>
            <person name="Fukushima T."/>
            <person name="Furuno M."/>
            <person name="Futaki S."/>
            <person name="Gariboldi M."/>
            <person name="Georgii-Hemming P."/>
            <person name="Gingeras T.R."/>
            <person name="Gojobori T."/>
            <person name="Green R.E."/>
            <person name="Gustincich S."/>
            <person name="Harbers M."/>
            <person name="Hayashi Y."/>
            <person name="Hensch T.K."/>
            <person name="Hirokawa N."/>
            <person name="Hill D."/>
            <person name="Huminiecki L."/>
            <person name="Iacono M."/>
            <person name="Ikeo K."/>
            <person name="Iwama A."/>
            <person name="Ishikawa T."/>
            <person name="Jakt M."/>
            <person name="Kanapin A."/>
            <person name="Katoh M."/>
            <person name="Kawasawa Y."/>
            <person name="Kelso J."/>
            <person name="Kitamura H."/>
            <person name="Kitano H."/>
            <person name="Kollias G."/>
            <person name="Krishnan S.P."/>
            <person name="Kruger A."/>
            <person name="Kummerfeld S.K."/>
            <person name="Kurochkin I.V."/>
            <person name="Lareau L.F."/>
            <person name="Lazarevic D."/>
            <person name="Lipovich L."/>
            <person name="Liu J."/>
            <person name="Liuni S."/>
            <person name="McWilliam S."/>
            <person name="Madan Babu M."/>
            <person name="Madera M."/>
            <person name="Marchionni L."/>
            <person name="Matsuda H."/>
            <person name="Matsuzawa S."/>
            <person name="Miki H."/>
            <person name="Mignone F."/>
            <person name="Miyake S."/>
            <person name="Morris K."/>
            <person name="Mottagui-Tabar S."/>
            <person name="Mulder N."/>
            <person name="Nakano N."/>
            <person name="Nakauchi H."/>
            <person name="Ng P."/>
            <person name="Nilsson R."/>
            <person name="Nishiguchi S."/>
            <person name="Nishikawa S."/>
            <person name="Nori F."/>
            <person name="Ohara O."/>
            <person name="Okazaki Y."/>
            <person name="Orlando V."/>
            <person name="Pang K.C."/>
            <person name="Pavan W.J."/>
            <person name="Pavesi G."/>
            <person name="Pesole G."/>
            <person name="Petrovsky N."/>
            <person name="Piazza S."/>
            <person name="Reed J."/>
            <person name="Reid J.F."/>
            <person name="Ring B.Z."/>
            <person name="Ringwald M."/>
            <person name="Rost B."/>
            <person name="Ruan Y."/>
            <person name="Salzberg S.L."/>
            <person name="Sandelin A."/>
            <person name="Schneider C."/>
            <person name="Schoenbach C."/>
            <person name="Sekiguchi K."/>
            <person name="Semple C.A."/>
            <person name="Seno S."/>
            <person name="Sessa L."/>
            <person name="Sheng Y."/>
            <person name="Shibata Y."/>
            <person name="Shimada H."/>
            <person name="Shimada K."/>
            <person name="Silva D."/>
            <person name="Sinclair B."/>
            <person name="Sperling S."/>
            <person name="Stupka E."/>
            <person name="Sugiura K."/>
            <person name="Sultana R."/>
            <person name="Takenaka Y."/>
            <person name="Taki K."/>
            <person name="Tammoja K."/>
            <person name="Tan S.L."/>
            <person name="Tang S."/>
            <person name="Taylor M.S."/>
            <person name="Tegner J."/>
            <person name="Teichmann S.A."/>
            <person name="Ueda H.R."/>
            <person name="van Nimwegen E."/>
            <person name="Verardo R."/>
            <person name="Wei C.L."/>
            <person name="Yagi K."/>
            <person name="Yamanishi H."/>
            <person name="Zabarovsky E."/>
            <person name="Zhu S."/>
            <person name="Zimmer A."/>
            <person name="Hide W."/>
            <person name="Bult C."/>
            <person name="Grimmond S.M."/>
            <person name="Teasdale R.D."/>
            <person name="Liu E.T."/>
            <person name="Brusic V."/>
            <person name="Quackenbush J."/>
            <person name="Wahlestedt C."/>
            <person name="Mattick J.S."/>
            <person name="Hume D.A."/>
            <person name="Kai C."/>
            <person name="Sasaki D."/>
            <person name="Tomaru Y."/>
            <person name="Fukuda S."/>
            <person name="Kanamori-Katayama M."/>
            <person name="Suzuki M."/>
            <person name="Aoki J."/>
            <person name="Arakawa T."/>
            <person name="Iida J."/>
            <person name="Imamura K."/>
            <person name="Itoh M."/>
            <person name="Kato T."/>
            <person name="Kawaji H."/>
            <person name="Kawagashira N."/>
            <person name="Kawashima T."/>
            <person name="Kojima M."/>
            <person name="Kondo S."/>
            <person name="Konno H."/>
            <person name="Nakano K."/>
            <person name="Ninomiya N."/>
            <person name="Nishio T."/>
            <person name="Okada M."/>
            <person name="Plessy C."/>
            <person name="Shibata K."/>
            <person name="Shiraki T."/>
            <person name="Suzuki S."/>
            <person name="Tagami M."/>
            <person name="Waki K."/>
            <person name="Watahiki A."/>
            <person name="Okamura-Oho Y."/>
            <person name="Suzuki H."/>
            <person name="Kawai J."/>
            <person name="Hayashizaki Y."/>
        </authorList>
    </citation>
    <scope>NUCLEOTIDE SEQUENCE [LARGE SCALE MRNA]</scope>
    <source>
        <strain>C57BL/6J</strain>
        <tissue>Bone marrow</tissue>
        <tissue>Embryo</tissue>
        <tissue>Pancreas</tissue>
        <tissue>Tongue</tissue>
    </source>
</reference>
<reference key="2">
    <citation type="journal article" date="2009" name="PLoS Biol.">
        <title>Lineage-specific biology revealed by a finished genome assembly of the mouse.</title>
        <authorList>
            <person name="Church D.M."/>
            <person name="Goodstadt L."/>
            <person name="Hillier L.W."/>
            <person name="Zody M.C."/>
            <person name="Goldstein S."/>
            <person name="She X."/>
            <person name="Bult C.J."/>
            <person name="Agarwala R."/>
            <person name="Cherry J.L."/>
            <person name="DiCuccio M."/>
            <person name="Hlavina W."/>
            <person name="Kapustin Y."/>
            <person name="Meric P."/>
            <person name="Maglott D."/>
            <person name="Birtle Z."/>
            <person name="Marques A.C."/>
            <person name="Graves T."/>
            <person name="Zhou S."/>
            <person name="Teague B."/>
            <person name="Potamousis K."/>
            <person name="Churas C."/>
            <person name="Place M."/>
            <person name="Herschleb J."/>
            <person name="Runnheim R."/>
            <person name="Forrest D."/>
            <person name="Amos-Landgraf J."/>
            <person name="Schwartz D.C."/>
            <person name="Cheng Z."/>
            <person name="Lindblad-Toh K."/>
            <person name="Eichler E.E."/>
            <person name="Ponting C.P."/>
        </authorList>
    </citation>
    <scope>NUCLEOTIDE SEQUENCE [LARGE SCALE GENOMIC DNA]</scope>
    <source>
        <strain>C57BL/6J</strain>
    </source>
</reference>
<reference key="3">
    <citation type="submission" date="2005-07" db="EMBL/GenBank/DDBJ databases">
        <authorList>
            <person name="Mural R.J."/>
            <person name="Adams M.D."/>
            <person name="Myers E.W."/>
            <person name="Smith H.O."/>
            <person name="Venter J.C."/>
        </authorList>
    </citation>
    <scope>NUCLEOTIDE SEQUENCE [LARGE SCALE GENOMIC DNA]</scope>
</reference>
<reference key="4">
    <citation type="journal article" date="2004" name="Genome Res.">
        <title>The status, quality, and expansion of the NIH full-length cDNA project: the Mammalian Gene Collection (MGC).</title>
        <authorList>
            <consortium name="The MGC Project Team"/>
        </authorList>
    </citation>
    <scope>NUCLEOTIDE SEQUENCE [LARGE SCALE MRNA]</scope>
    <source>
        <strain>FVB/N</strain>
        <tissue>Mammary tumor</tissue>
    </source>
</reference>
<reference key="5">
    <citation type="journal article" date="2006" name="Circ. Res.">
        <title>Mapping the murine cardiac 26S proteasome complexes.</title>
        <authorList>
            <person name="Gomes A.V."/>
            <person name="Zong C."/>
            <person name="Edmondson R.D."/>
            <person name="Li X."/>
            <person name="Stefani E."/>
            <person name="Zhang J."/>
            <person name="Jones R.C."/>
            <person name="Thyparambil S."/>
            <person name="Wang G.W."/>
            <person name="Qiao X."/>
            <person name="Bardag-Gorce F."/>
            <person name="Ping P."/>
        </authorList>
    </citation>
    <scope>IDENTIFICATION IN THE 19S PROTEASOME REGULATORY COMPLEX</scope>
    <scope>ACETYLATION AT ALA-2</scope>
</reference>
<reference key="6">
    <citation type="journal article" date="2010" name="Cell">
        <title>A tissue-specific atlas of mouse protein phosphorylation and expression.</title>
        <authorList>
            <person name="Huttlin E.L."/>
            <person name="Jedrychowski M.P."/>
            <person name="Elias J.E."/>
            <person name="Goswami T."/>
            <person name="Rad R."/>
            <person name="Beausoleil S.A."/>
            <person name="Villen J."/>
            <person name="Haas W."/>
            <person name="Sowa M.E."/>
            <person name="Gygi S.P."/>
        </authorList>
    </citation>
    <scope>IDENTIFICATION BY MASS SPECTROMETRY [LARGE SCALE ANALYSIS]</scope>
    <source>
        <tissue>Brain</tissue>
        <tissue>Brown adipose tissue</tissue>
        <tissue>Heart</tissue>
        <tissue>Kidney</tissue>
        <tissue>Liver</tissue>
        <tissue>Lung</tissue>
        <tissue>Pancreas</tissue>
        <tissue>Spleen</tissue>
        <tissue>Testis</tissue>
    </source>
</reference>
<proteinExistence type="evidence at protein level"/>
<sequence length="456" mass="52895">MADGGSERADGRIVKMEVDYSATVDQRLPECEKLAKEGRLQEVIETLLSLEKQTRTASDMVSTSRILVAVVKMCYEAKEWDLLNENIMLLSKRRSQLKQAVAKMVQQCCTYVEEITDLPVKLRLIDTLRMVTEGKIYVEIERARLTKTLATIKEQNGDVKEAASILQELQVETYGSMEKKERVEFILEQMRLCLAVKDYIRTQIISKKINTKFFQEENTENLKLKYYNLMIQLDQHEGSYLSICKHYRAIYDTPCIQAESDKWQQALKSVVLYVILAPFDNEQSDLVHRISSDKKLEEIPKYKDLLKLFTTMELMRWSTLVEDYGVELRKGSSETPATDVFSSTEEGEKRWKDLKSRVVEHNIRIMAKYYTRITMKRMAQLLDLSVDESEAFLSNLVVNKTIFAKVDRLAGVINFQRPKDPNNLLNDWSQKLNSLMSLVNKTTHLIAKEEMIHNLQ</sequence>
<accession>Q9D8W5</accession>
<accession>Q9CQT4</accession>
<accession>Q9CYB3</accession>